<protein>
    <recommendedName>
        <fullName evidence="1">Proline--tRNA ligase</fullName>
        <ecNumber evidence="1">6.1.1.15</ecNumber>
    </recommendedName>
    <alternativeName>
        <fullName evidence="1">Prolyl-tRNA synthetase</fullName>
        <shortName evidence="1">ProRS</shortName>
    </alternativeName>
</protein>
<reference key="1">
    <citation type="journal article" date="2006" name="Nat. Biotechnol.">
        <title>Complete genome of the mutualistic, N2-fixing grass endophyte Azoarcus sp. strain BH72.</title>
        <authorList>
            <person name="Krause A."/>
            <person name="Ramakumar A."/>
            <person name="Bartels D."/>
            <person name="Battistoni F."/>
            <person name="Bekel T."/>
            <person name="Boch J."/>
            <person name="Boehm M."/>
            <person name="Friedrich F."/>
            <person name="Hurek T."/>
            <person name="Krause L."/>
            <person name="Linke B."/>
            <person name="McHardy A.C."/>
            <person name="Sarkar A."/>
            <person name="Schneiker S."/>
            <person name="Syed A.A."/>
            <person name="Thauer R."/>
            <person name="Vorhoelter F.-J."/>
            <person name="Weidner S."/>
            <person name="Puehler A."/>
            <person name="Reinhold-Hurek B."/>
            <person name="Kaiser O."/>
            <person name="Goesmann A."/>
        </authorList>
    </citation>
    <scope>NUCLEOTIDE SEQUENCE [LARGE SCALE GENOMIC DNA]</scope>
    <source>
        <strain>BH72</strain>
    </source>
</reference>
<accession>A1K976</accession>
<organism>
    <name type="scientific">Azoarcus sp. (strain BH72)</name>
    <dbReference type="NCBI Taxonomy" id="418699"/>
    <lineage>
        <taxon>Bacteria</taxon>
        <taxon>Pseudomonadati</taxon>
        <taxon>Pseudomonadota</taxon>
        <taxon>Betaproteobacteria</taxon>
        <taxon>Rhodocyclales</taxon>
        <taxon>Zoogloeaceae</taxon>
        <taxon>Azoarcus</taxon>
    </lineage>
</organism>
<keyword id="KW-0030">Aminoacyl-tRNA synthetase</keyword>
<keyword id="KW-0067">ATP-binding</keyword>
<keyword id="KW-0963">Cytoplasm</keyword>
<keyword id="KW-0436">Ligase</keyword>
<keyword id="KW-0547">Nucleotide-binding</keyword>
<keyword id="KW-0648">Protein biosynthesis</keyword>
<keyword id="KW-1185">Reference proteome</keyword>
<name>SYP_AZOSB</name>
<comment type="function">
    <text evidence="1">Catalyzes the attachment of proline to tRNA(Pro) in a two-step reaction: proline is first activated by ATP to form Pro-AMP and then transferred to the acceptor end of tRNA(Pro). As ProRS can inadvertently accommodate and process non-cognate amino acids such as alanine and cysteine, to avoid such errors it has two additional distinct editing activities against alanine. One activity is designated as 'pretransfer' editing and involves the tRNA(Pro)-independent hydrolysis of activated Ala-AMP. The other activity is designated 'posttransfer' editing and involves deacylation of mischarged Ala-tRNA(Pro). The misacylated Cys-tRNA(Pro) is not edited by ProRS.</text>
</comment>
<comment type="catalytic activity">
    <reaction evidence="1">
        <text>tRNA(Pro) + L-proline + ATP = L-prolyl-tRNA(Pro) + AMP + diphosphate</text>
        <dbReference type="Rhea" id="RHEA:14305"/>
        <dbReference type="Rhea" id="RHEA-COMP:9700"/>
        <dbReference type="Rhea" id="RHEA-COMP:9702"/>
        <dbReference type="ChEBI" id="CHEBI:30616"/>
        <dbReference type="ChEBI" id="CHEBI:33019"/>
        <dbReference type="ChEBI" id="CHEBI:60039"/>
        <dbReference type="ChEBI" id="CHEBI:78442"/>
        <dbReference type="ChEBI" id="CHEBI:78532"/>
        <dbReference type="ChEBI" id="CHEBI:456215"/>
        <dbReference type="EC" id="6.1.1.15"/>
    </reaction>
</comment>
<comment type="subunit">
    <text evidence="1">Homodimer.</text>
</comment>
<comment type="subcellular location">
    <subcellularLocation>
        <location evidence="1">Cytoplasm</location>
    </subcellularLocation>
</comment>
<comment type="domain">
    <text evidence="1">Consists of three domains: the N-terminal catalytic domain, the editing domain and the C-terminal anticodon-binding domain.</text>
</comment>
<comment type="similarity">
    <text evidence="1">Belongs to the class-II aminoacyl-tRNA synthetase family. ProS type 1 subfamily.</text>
</comment>
<feature type="chain" id="PRO_0000288311" description="Proline--tRNA ligase">
    <location>
        <begin position="1"/>
        <end position="581"/>
    </location>
</feature>
<proteinExistence type="inferred from homology"/>
<sequence>MRARQFFISTLKEAPADAEVVSQKLMLRAGMIRKVAAGIYNYLPMGLKSIRKVENIIREEMNRAGALELTMPLVQPSELWQETGRWDKMGPEMLRFKDRHERDFALQPTSEEVVTDIARQELKSYRQLPKNFYQIQTKFRDERRPRFGVMRGREFTMKDAYSFDRSAEAAGESYDAMYAAYSRIFDRLGLTYRAVAADTGAIGGDRSHEFQVIADTGEDAIVYCPDSSYAANIELAEALSLLPARAGASAPLAKTPTPGKSTCEDVAALLGVPLASTVKSLVLATDDEDESGKVVKSTVWLLLVRGDHELNEVKAGKIEGLKAGFRFATEAEILDHFGCKPGYLGPIGLAQPVKVIADRTVANMADFVCGANAEDFHYTGANWGRDLPEPDLVADIRNVVEGDPSPDGKGKLAIQRGIEVGHVFYLGTKYSKAMNATFLDVDGKPKHFEMGCYGIGVTRILGAAIEQNHDERGIIWPASIAPFEVVICPVGWSKSEAVRDEAQKLYDALVAAGVDVILDDRDERPGVMFADWELIGVPHRVTIGDRGLKEGVAEYQGRRDPEASRVAVAEIAPHLISRLRP</sequence>
<gene>
    <name evidence="1" type="primary">proS</name>
    <name type="ordered locus">azo2765</name>
</gene>
<evidence type="ECO:0000255" key="1">
    <source>
        <dbReference type="HAMAP-Rule" id="MF_01569"/>
    </source>
</evidence>
<dbReference type="EC" id="6.1.1.15" evidence="1"/>
<dbReference type="EMBL" id="AM406670">
    <property type="protein sequence ID" value="CAL95381.1"/>
    <property type="molecule type" value="Genomic_DNA"/>
</dbReference>
<dbReference type="RefSeq" id="WP_011766491.1">
    <property type="nucleotide sequence ID" value="NC_008702.1"/>
</dbReference>
<dbReference type="SMR" id="A1K976"/>
<dbReference type="STRING" id="62928.azo2765"/>
<dbReference type="KEGG" id="azo:azo2765"/>
<dbReference type="eggNOG" id="COG0442">
    <property type="taxonomic scope" value="Bacteria"/>
</dbReference>
<dbReference type="HOGENOM" id="CLU_016739_0_0_4"/>
<dbReference type="Proteomes" id="UP000002588">
    <property type="component" value="Chromosome"/>
</dbReference>
<dbReference type="GO" id="GO:0005829">
    <property type="term" value="C:cytosol"/>
    <property type="evidence" value="ECO:0007669"/>
    <property type="project" value="TreeGrafter"/>
</dbReference>
<dbReference type="GO" id="GO:0002161">
    <property type="term" value="F:aminoacyl-tRNA deacylase activity"/>
    <property type="evidence" value="ECO:0007669"/>
    <property type="project" value="InterPro"/>
</dbReference>
<dbReference type="GO" id="GO:0005524">
    <property type="term" value="F:ATP binding"/>
    <property type="evidence" value="ECO:0007669"/>
    <property type="project" value="UniProtKB-UniRule"/>
</dbReference>
<dbReference type="GO" id="GO:0004827">
    <property type="term" value="F:proline-tRNA ligase activity"/>
    <property type="evidence" value="ECO:0007669"/>
    <property type="project" value="UniProtKB-UniRule"/>
</dbReference>
<dbReference type="GO" id="GO:0006433">
    <property type="term" value="P:prolyl-tRNA aminoacylation"/>
    <property type="evidence" value="ECO:0007669"/>
    <property type="project" value="UniProtKB-UniRule"/>
</dbReference>
<dbReference type="CDD" id="cd04334">
    <property type="entry name" value="ProRS-INS"/>
    <property type="match status" value="1"/>
</dbReference>
<dbReference type="CDD" id="cd00861">
    <property type="entry name" value="ProRS_anticodon_short"/>
    <property type="match status" value="1"/>
</dbReference>
<dbReference type="CDD" id="cd00779">
    <property type="entry name" value="ProRS_core_prok"/>
    <property type="match status" value="1"/>
</dbReference>
<dbReference type="FunFam" id="3.30.930.10:FF:000012">
    <property type="entry name" value="Proline--tRNA ligase"/>
    <property type="match status" value="1"/>
</dbReference>
<dbReference type="FunFam" id="3.30.930.10:FF:000097">
    <property type="entry name" value="Proline--tRNA ligase"/>
    <property type="match status" value="1"/>
</dbReference>
<dbReference type="Gene3D" id="3.40.50.800">
    <property type="entry name" value="Anticodon-binding domain"/>
    <property type="match status" value="1"/>
</dbReference>
<dbReference type="Gene3D" id="3.30.930.10">
    <property type="entry name" value="Bira Bifunctional Protein, Domain 2"/>
    <property type="match status" value="2"/>
</dbReference>
<dbReference type="Gene3D" id="3.90.960.10">
    <property type="entry name" value="YbaK/aminoacyl-tRNA synthetase-associated domain"/>
    <property type="match status" value="1"/>
</dbReference>
<dbReference type="HAMAP" id="MF_01569">
    <property type="entry name" value="Pro_tRNA_synth_type1"/>
    <property type="match status" value="1"/>
</dbReference>
<dbReference type="InterPro" id="IPR002314">
    <property type="entry name" value="aa-tRNA-synt_IIb"/>
</dbReference>
<dbReference type="InterPro" id="IPR006195">
    <property type="entry name" value="aa-tRNA-synth_II"/>
</dbReference>
<dbReference type="InterPro" id="IPR045864">
    <property type="entry name" value="aa-tRNA-synth_II/BPL/LPL"/>
</dbReference>
<dbReference type="InterPro" id="IPR004154">
    <property type="entry name" value="Anticodon-bd"/>
</dbReference>
<dbReference type="InterPro" id="IPR036621">
    <property type="entry name" value="Anticodon-bd_dom_sf"/>
</dbReference>
<dbReference type="InterPro" id="IPR002316">
    <property type="entry name" value="Pro-tRNA-ligase_IIa"/>
</dbReference>
<dbReference type="InterPro" id="IPR004500">
    <property type="entry name" value="Pro-tRNA-synth_IIa_bac-type"/>
</dbReference>
<dbReference type="InterPro" id="IPR023717">
    <property type="entry name" value="Pro-tRNA-Synthase_IIa_type1"/>
</dbReference>
<dbReference type="InterPro" id="IPR050062">
    <property type="entry name" value="Pro-tRNA_synthetase"/>
</dbReference>
<dbReference type="InterPro" id="IPR044140">
    <property type="entry name" value="ProRS_anticodon_short"/>
</dbReference>
<dbReference type="InterPro" id="IPR033730">
    <property type="entry name" value="ProRS_core_prok"/>
</dbReference>
<dbReference type="InterPro" id="IPR036754">
    <property type="entry name" value="YbaK/aa-tRNA-synt-asso_dom_sf"/>
</dbReference>
<dbReference type="InterPro" id="IPR007214">
    <property type="entry name" value="YbaK/aa-tRNA-synth-assoc-dom"/>
</dbReference>
<dbReference type="NCBIfam" id="NF006625">
    <property type="entry name" value="PRK09194.1"/>
    <property type="match status" value="1"/>
</dbReference>
<dbReference type="NCBIfam" id="TIGR00409">
    <property type="entry name" value="proS_fam_II"/>
    <property type="match status" value="1"/>
</dbReference>
<dbReference type="PANTHER" id="PTHR42753">
    <property type="entry name" value="MITOCHONDRIAL RIBOSOME PROTEIN L39/PROLYL-TRNA LIGASE FAMILY MEMBER"/>
    <property type="match status" value="1"/>
</dbReference>
<dbReference type="PANTHER" id="PTHR42753:SF2">
    <property type="entry name" value="PROLINE--TRNA LIGASE"/>
    <property type="match status" value="1"/>
</dbReference>
<dbReference type="Pfam" id="PF03129">
    <property type="entry name" value="HGTP_anticodon"/>
    <property type="match status" value="1"/>
</dbReference>
<dbReference type="Pfam" id="PF00587">
    <property type="entry name" value="tRNA-synt_2b"/>
    <property type="match status" value="1"/>
</dbReference>
<dbReference type="Pfam" id="PF04073">
    <property type="entry name" value="tRNA_edit"/>
    <property type="match status" value="1"/>
</dbReference>
<dbReference type="PIRSF" id="PIRSF001535">
    <property type="entry name" value="ProRS_1"/>
    <property type="match status" value="1"/>
</dbReference>
<dbReference type="PRINTS" id="PR01046">
    <property type="entry name" value="TRNASYNTHPRO"/>
</dbReference>
<dbReference type="SUPFAM" id="SSF52954">
    <property type="entry name" value="Class II aaRS ABD-related"/>
    <property type="match status" value="1"/>
</dbReference>
<dbReference type="SUPFAM" id="SSF55681">
    <property type="entry name" value="Class II aaRS and biotin synthetases"/>
    <property type="match status" value="1"/>
</dbReference>
<dbReference type="SUPFAM" id="SSF55826">
    <property type="entry name" value="YbaK/ProRS associated domain"/>
    <property type="match status" value="1"/>
</dbReference>
<dbReference type="PROSITE" id="PS50862">
    <property type="entry name" value="AA_TRNA_LIGASE_II"/>
    <property type="match status" value="1"/>
</dbReference>